<proteinExistence type="evidence at protein level"/>
<keyword id="KW-0053">Apoptosis</keyword>
<keyword id="KW-0539">Nucleus</keyword>
<keyword id="KW-1185">Reference proteome</keyword>
<keyword id="KW-0804">Transcription</keyword>
<keyword id="KW-0805">Transcription regulation</keyword>
<protein>
    <recommendedName>
        <fullName evidence="2">Transcriptional cofactor Bfc</fullName>
    </recommendedName>
    <alternativeName>
        <fullName evidence="3">Booster for Crq</fullName>
    </alternativeName>
</protein>
<name>BFC_DROME</name>
<reference evidence="6" key="1">
    <citation type="journal article" date="2000" name="Science">
        <title>The genome sequence of Drosophila melanogaster.</title>
        <authorList>
            <person name="Adams M.D."/>
            <person name="Celniker S.E."/>
            <person name="Holt R.A."/>
            <person name="Evans C.A."/>
            <person name="Gocayne J.D."/>
            <person name="Amanatides P.G."/>
            <person name="Scherer S.E."/>
            <person name="Li P.W."/>
            <person name="Hoskins R.A."/>
            <person name="Galle R.F."/>
            <person name="George R.A."/>
            <person name="Lewis S.E."/>
            <person name="Richards S."/>
            <person name="Ashburner M."/>
            <person name="Henderson S.N."/>
            <person name="Sutton G.G."/>
            <person name="Wortman J.R."/>
            <person name="Yandell M.D."/>
            <person name="Zhang Q."/>
            <person name="Chen L.X."/>
            <person name="Brandon R.C."/>
            <person name="Rogers Y.-H.C."/>
            <person name="Blazej R.G."/>
            <person name="Champe M."/>
            <person name="Pfeiffer B.D."/>
            <person name="Wan K.H."/>
            <person name="Doyle C."/>
            <person name="Baxter E.G."/>
            <person name="Helt G."/>
            <person name="Nelson C.R."/>
            <person name="Miklos G.L.G."/>
            <person name="Abril J.F."/>
            <person name="Agbayani A."/>
            <person name="An H.-J."/>
            <person name="Andrews-Pfannkoch C."/>
            <person name="Baldwin D."/>
            <person name="Ballew R.M."/>
            <person name="Basu A."/>
            <person name="Baxendale J."/>
            <person name="Bayraktaroglu L."/>
            <person name="Beasley E.M."/>
            <person name="Beeson K.Y."/>
            <person name="Benos P.V."/>
            <person name="Berman B.P."/>
            <person name="Bhandari D."/>
            <person name="Bolshakov S."/>
            <person name="Borkova D."/>
            <person name="Botchan M.R."/>
            <person name="Bouck J."/>
            <person name="Brokstein P."/>
            <person name="Brottier P."/>
            <person name="Burtis K.C."/>
            <person name="Busam D.A."/>
            <person name="Butler H."/>
            <person name="Cadieu E."/>
            <person name="Center A."/>
            <person name="Chandra I."/>
            <person name="Cherry J.M."/>
            <person name="Cawley S."/>
            <person name="Dahlke C."/>
            <person name="Davenport L.B."/>
            <person name="Davies P."/>
            <person name="de Pablos B."/>
            <person name="Delcher A."/>
            <person name="Deng Z."/>
            <person name="Mays A.D."/>
            <person name="Dew I."/>
            <person name="Dietz S.M."/>
            <person name="Dodson K."/>
            <person name="Doup L.E."/>
            <person name="Downes M."/>
            <person name="Dugan-Rocha S."/>
            <person name="Dunkov B.C."/>
            <person name="Dunn P."/>
            <person name="Durbin K.J."/>
            <person name="Evangelista C.C."/>
            <person name="Ferraz C."/>
            <person name="Ferriera S."/>
            <person name="Fleischmann W."/>
            <person name="Fosler C."/>
            <person name="Gabrielian A.E."/>
            <person name="Garg N.S."/>
            <person name="Gelbart W.M."/>
            <person name="Glasser K."/>
            <person name="Glodek A."/>
            <person name="Gong F."/>
            <person name="Gorrell J.H."/>
            <person name="Gu Z."/>
            <person name="Guan P."/>
            <person name="Harris M."/>
            <person name="Harris N.L."/>
            <person name="Harvey D.A."/>
            <person name="Heiman T.J."/>
            <person name="Hernandez J.R."/>
            <person name="Houck J."/>
            <person name="Hostin D."/>
            <person name="Houston K.A."/>
            <person name="Howland T.J."/>
            <person name="Wei M.-H."/>
            <person name="Ibegwam C."/>
            <person name="Jalali M."/>
            <person name="Kalush F."/>
            <person name="Karpen G.H."/>
            <person name="Ke Z."/>
            <person name="Kennison J.A."/>
            <person name="Ketchum K.A."/>
            <person name="Kimmel B.E."/>
            <person name="Kodira C.D."/>
            <person name="Kraft C.L."/>
            <person name="Kravitz S."/>
            <person name="Kulp D."/>
            <person name="Lai Z."/>
            <person name="Lasko P."/>
            <person name="Lei Y."/>
            <person name="Levitsky A.A."/>
            <person name="Li J.H."/>
            <person name="Li Z."/>
            <person name="Liang Y."/>
            <person name="Lin X."/>
            <person name="Liu X."/>
            <person name="Mattei B."/>
            <person name="McIntosh T.C."/>
            <person name="McLeod M.P."/>
            <person name="McPherson D."/>
            <person name="Merkulov G."/>
            <person name="Milshina N.V."/>
            <person name="Mobarry C."/>
            <person name="Morris J."/>
            <person name="Moshrefi A."/>
            <person name="Mount S.M."/>
            <person name="Moy M."/>
            <person name="Murphy B."/>
            <person name="Murphy L."/>
            <person name="Muzny D.M."/>
            <person name="Nelson D.L."/>
            <person name="Nelson D.R."/>
            <person name="Nelson K.A."/>
            <person name="Nixon K."/>
            <person name="Nusskern D.R."/>
            <person name="Pacleb J.M."/>
            <person name="Palazzolo M."/>
            <person name="Pittman G.S."/>
            <person name="Pan S."/>
            <person name="Pollard J."/>
            <person name="Puri V."/>
            <person name="Reese M.G."/>
            <person name="Reinert K."/>
            <person name="Remington K."/>
            <person name="Saunders R.D.C."/>
            <person name="Scheeler F."/>
            <person name="Shen H."/>
            <person name="Shue B.C."/>
            <person name="Siden-Kiamos I."/>
            <person name="Simpson M."/>
            <person name="Skupski M.P."/>
            <person name="Smith T.J."/>
            <person name="Spier E."/>
            <person name="Spradling A.C."/>
            <person name="Stapleton M."/>
            <person name="Strong R."/>
            <person name="Sun E."/>
            <person name="Svirskas R."/>
            <person name="Tector C."/>
            <person name="Turner R."/>
            <person name="Venter E."/>
            <person name="Wang A.H."/>
            <person name="Wang X."/>
            <person name="Wang Z.-Y."/>
            <person name="Wassarman D.A."/>
            <person name="Weinstock G.M."/>
            <person name="Weissenbach J."/>
            <person name="Williams S.M."/>
            <person name="Woodage T."/>
            <person name="Worley K.C."/>
            <person name="Wu D."/>
            <person name="Yang S."/>
            <person name="Yao Q.A."/>
            <person name="Ye J."/>
            <person name="Yeh R.-F."/>
            <person name="Zaveri J.S."/>
            <person name="Zhan M."/>
            <person name="Zhang G."/>
            <person name="Zhao Q."/>
            <person name="Zheng L."/>
            <person name="Zheng X.H."/>
            <person name="Zhong F.N."/>
            <person name="Zhong W."/>
            <person name="Zhou X."/>
            <person name="Zhu S.C."/>
            <person name="Zhu X."/>
            <person name="Smith H.O."/>
            <person name="Gibbs R.A."/>
            <person name="Myers E.W."/>
            <person name="Rubin G.M."/>
            <person name="Venter J.C."/>
        </authorList>
    </citation>
    <scope>NUCLEOTIDE SEQUENCE [LARGE SCALE GENOMIC DNA]</scope>
    <source>
        <strain>Berkeley</strain>
    </source>
</reference>
<reference evidence="6" key="2">
    <citation type="journal article" date="2002" name="Genome Biol.">
        <title>Annotation of the Drosophila melanogaster euchromatic genome: a systematic review.</title>
        <authorList>
            <person name="Misra S."/>
            <person name="Crosby M.A."/>
            <person name="Mungall C.J."/>
            <person name="Matthews B.B."/>
            <person name="Campbell K.S."/>
            <person name="Hradecky P."/>
            <person name="Huang Y."/>
            <person name="Kaminker J.S."/>
            <person name="Millburn G.H."/>
            <person name="Prochnik S.E."/>
            <person name="Smith C.D."/>
            <person name="Tupy J.L."/>
            <person name="Whitfield E.J."/>
            <person name="Bayraktaroglu L."/>
            <person name="Berman B.P."/>
            <person name="Bettencourt B.R."/>
            <person name="Celniker S.E."/>
            <person name="de Grey A.D.N.J."/>
            <person name="Drysdale R.A."/>
            <person name="Harris N.L."/>
            <person name="Richter J."/>
            <person name="Russo S."/>
            <person name="Schroeder A.J."/>
            <person name="Shu S.Q."/>
            <person name="Stapleton M."/>
            <person name="Yamada C."/>
            <person name="Ashburner M."/>
            <person name="Gelbart W.M."/>
            <person name="Rubin G.M."/>
            <person name="Lewis S.E."/>
        </authorList>
    </citation>
    <scope>GENOME REANNOTATION</scope>
    <source>
        <strain>Berkeley</strain>
    </source>
</reference>
<reference evidence="4" key="3">
    <citation type="journal article" date="2002" name="Genome Biol.">
        <title>A Drosophila full-length cDNA resource.</title>
        <authorList>
            <person name="Stapleton M."/>
            <person name="Carlson J.W."/>
            <person name="Brokstein P."/>
            <person name="Yu C."/>
            <person name="Champe M."/>
            <person name="George R.A."/>
            <person name="Guarin H."/>
            <person name="Kronmiller B."/>
            <person name="Pacleb J.M."/>
            <person name="Park S."/>
            <person name="Wan K.H."/>
            <person name="Rubin G.M."/>
            <person name="Celniker S.E."/>
        </authorList>
    </citation>
    <scope>NUCLEOTIDE SEQUENCE [LARGE SCALE MRNA]</scope>
    <source>
        <strain>Berkeley</strain>
        <tissue>Testis</tissue>
    </source>
</reference>
<reference evidence="2" key="4">
    <citation type="journal article" date="2021" name="PLoS Genet.">
        <title>bfc, a novel serpent co-factor for the expression of croquemort, regulates efferocytosis in Drosophila melanogaster.</title>
        <authorList>
            <person name="Zheng Q."/>
            <person name="Gao N."/>
            <person name="Sun Q."/>
            <person name="Li X."/>
            <person name="Wang Y."/>
            <person name="Xiao H."/>
        </authorList>
    </citation>
    <scope>FUNCTION</scope>
    <scope>INTERACTION WITH SRP</scope>
    <scope>SUBCELLULAR LOCATION</scope>
    <scope>DEVELOPMENTAL STAGE</scope>
    <scope>INDUCTION BY APOPTOTIC CELLS</scope>
    <scope>DISRUPTION PHENOTYPE</scope>
</reference>
<comment type="function">
    <text evidence="1">Transcriptional cofactor involved in efferocytosis (PubMed:34860835). Together with srp mediates expression of the phagocytic receptor crq/croquemort in response to apoptotic cells, and is up-regulated by crq/croquemort in a positive feedback mechanism (PubMed:34860835). Involved in macrophage engulfment and clearance of apoptotic cells during embryogenesis (PubMed:34860835).</text>
</comment>
<comment type="subunit">
    <text evidence="1">Interacts with srp (via GATA-type Zn-finger domain); this interaction enhances srp binding to the promoter of crq/croquemort.</text>
</comment>
<comment type="subcellular location">
    <subcellularLocation>
        <location evidence="1">Nucleus</location>
    </subcellularLocation>
</comment>
<comment type="developmental stage">
    <text evidence="1">Up-regulated between embryogenesis stage 9 and 12, which corresponds to the first wave of apoptosis (PubMed:34860835). Expressed in macrophages at embryonic stage 13 (at protein level) (PubMed:34860835).</text>
</comment>
<comment type="induction">
    <text evidence="1">Up-regulated in response to detection of apoptotic cells.</text>
</comment>
<comment type="disruption phenotype">
    <text evidence="1">No loss of viability or obvious developmental defects (PubMed:34860835). Reduced levels of apoptotic cell receptor crq/croquemort in macrophages during embryogenesis stages 11 to 14 (PubMed:34860835). No effect on macrophage development or distribution, but reduced ability to engulf and clear apoptotic cells during embryogenesis (PubMed:34860835).</text>
</comment>
<feature type="chain" id="PRO_0000458539" description="Transcriptional cofactor Bfc">
    <location>
        <begin position="1"/>
        <end position="251"/>
    </location>
</feature>
<feature type="sequence conflict" description="In Ref. 3; AAL90179." evidence="2" ref="3">
    <original>M</original>
    <variation>V</variation>
    <location>
        <position position="23"/>
    </location>
</feature>
<dbReference type="EMBL" id="AE014296">
    <property type="protein sequence ID" value="AAF47461.2"/>
    <property type="molecule type" value="Genomic_DNA"/>
</dbReference>
<dbReference type="EMBL" id="BT044379">
    <property type="protein sequence ID" value="ACH92444.1"/>
    <property type="molecule type" value="mRNA"/>
</dbReference>
<dbReference type="EMBL" id="AY089441">
    <property type="protein sequence ID" value="AAL90179.1"/>
    <property type="molecule type" value="mRNA"/>
</dbReference>
<dbReference type="RefSeq" id="NP_612088.2">
    <property type="nucleotide sequence ID" value="NM_138244.3"/>
</dbReference>
<dbReference type="FunCoup" id="Q9W0I5">
    <property type="interactions" value="7"/>
</dbReference>
<dbReference type="IntAct" id="Q9W0I5">
    <property type="interactions" value="1"/>
</dbReference>
<dbReference type="STRING" id="7227.FBpp0072547"/>
<dbReference type="PaxDb" id="7227-FBpp0072547"/>
<dbReference type="DNASU" id="38138"/>
<dbReference type="EnsemblMetazoa" id="FBtr0072653">
    <property type="protein sequence ID" value="FBpp0072547"/>
    <property type="gene ID" value="FBgn0035196"/>
</dbReference>
<dbReference type="GeneID" id="38138"/>
<dbReference type="KEGG" id="dme:Dmel_CG9129"/>
<dbReference type="UCSC" id="CG9129-RA">
    <property type="organism name" value="d. melanogaster"/>
</dbReference>
<dbReference type="AGR" id="FB:FBgn0035196"/>
<dbReference type="CTD" id="38138"/>
<dbReference type="FlyBase" id="FBgn0035196">
    <property type="gene designation" value="Bfc"/>
</dbReference>
<dbReference type="VEuPathDB" id="VectorBase:FBgn0035196"/>
<dbReference type="eggNOG" id="ENOG502S7AQ">
    <property type="taxonomic scope" value="Eukaryota"/>
</dbReference>
<dbReference type="GeneTree" id="ENSGT00710000107934"/>
<dbReference type="HOGENOM" id="CLU_1148279_0_0_1"/>
<dbReference type="OMA" id="RTDRCKF"/>
<dbReference type="OrthoDB" id="6624851at2759"/>
<dbReference type="BioGRID-ORCS" id="38138">
    <property type="hits" value="0 hits in 1 CRISPR screen"/>
</dbReference>
<dbReference type="ChiTaRS" id="CG9129">
    <property type="organism name" value="fly"/>
</dbReference>
<dbReference type="GenomeRNAi" id="38138"/>
<dbReference type="PRO" id="PR:Q9W0I5"/>
<dbReference type="Proteomes" id="UP000000803">
    <property type="component" value="Chromosome 3L"/>
</dbReference>
<dbReference type="Bgee" id="FBgn0035196">
    <property type="expression patterns" value="Expressed in early elongation stage spermatid (Drosophila) in testis and 31 other cell types or tissues"/>
</dbReference>
<dbReference type="ExpressionAtlas" id="Q9W0I5">
    <property type="expression patterns" value="baseline and differential"/>
</dbReference>
<dbReference type="GO" id="GO:0005634">
    <property type="term" value="C:nucleus"/>
    <property type="evidence" value="ECO:0000314"/>
    <property type="project" value="FlyBase"/>
</dbReference>
<dbReference type="GO" id="GO:0090575">
    <property type="term" value="C:RNA polymerase II transcription regulator complex"/>
    <property type="evidence" value="ECO:0000353"/>
    <property type="project" value="FlyBase"/>
</dbReference>
<dbReference type="GO" id="GO:0140297">
    <property type="term" value="F:DNA-binding transcription factor binding"/>
    <property type="evidence" value="ECO:0000353"/>
    <property type="project" value="FlyBase"/>
</dbReference>
<dbReference type="GO" id="GO:0003713">
    <property type="term" value="F:transcription coactivator activity"/>
    <property type="evidence" value="ECO:0000314"/>
    <property type="project" value="FlyBase"/>
</dbReference>
<dbReference type="GO" id="GO:0006915">
    <property type="term" value="P:apoptotic process"/>
    <property type="evidence" value="ECO:0007669"/>
    <property type="project" value="UniProtKB-KW"/>
</dbReference>
<dbReference type="GO" id="GO:2000427">
    <property type="term" value="P:positive regulation of apoptotic cell clearance"/>
    <property type="evidence" value="ECO:0000315"/>
    <property type="project" value="FlyBase"/>
</dbReference>
<dbReference type="GO" id="GO:0045893">
    <property type="term" value="P:positive regulation of DNA-templated transcription"/>
    <property type="evidence" value="ECO:0000314"/>
    <property type="project" value="FlyBase"/>
</dbReference>
<dbReference type="InterPro" id="IPR054459">
    <property type="entry name" value="Bfc_dom"/>
</dbReference>
<dbReference type="Pfam" id="PF22576">
    <property type="entry name" value="Bfc"/>
    <property type="match status" value="1"/>
</dbReference>
<sequence length="251" mass="28881">MRMDKSEKRSNLADNFLYMLEFMVDDLLITRPNLCAPEEYPTCTEITFRSVFLNIRDRENGSCVNPCSPKCGKCTLFTLESPITDEDVMHIHVYKKRTESCKFLLGLTELPMKPIFDRVKKEFYSQNINWESNVESHLSRMPKLRGPCKKANDCVCYERNRERREQWCPTSELTKRMLPLFNLCKMQTGNIVLILRLVCNGPSVVSSFPVQRPVCKDPCNCCCPCPPTWPAPCSSPFDPCDPCKTVPAKKT</sequence>
<accession>Q9W0I5</accession>
<accession>Q8T3Y3</accession>
<evidence type="ECO:0000269" key="1">
    <source>
    </source>
</evidence>
<evidence type="ECO:0000305" key="2"/>
<evidence type="ECO:0000312" key="3">
    <source>
        <dbReference type="EMBL" id="AAF47461.2"/>
    </source>
</evidence>
<evidence type="ECO:0000312" key="4">
    <source>
        <dbReference type="EMBL" id="AAL90179.1"/>
    </source>
</evidence>
<evidence type="ECO:0000312" key="5">
    <source>
        <dbReference type="FlyBase" id="FBgn0035196"/>
    </source>
</evidence>
<evidence type="ECO:0000312" key="6">
    <source>
        <dbReference type="Proteomes" id="UP000000803"/>
    </source>
</evidence>
<gene>
    <name evidence="5" type="primary">Bfc</name>
    <name evidence="5" type="ORF">CG9129</name>
</gene>
<organism evidence="3 6">
    <name type="scientific">Drosophila melanogaster</name>
    <name type="common">Fruit fly</name>
    <dbReference type="NCBI Taxonomy" id="7227"/>
    <lineage>
        <taxon>Eukaryota</taxon>
        <taxon>Metazoa</taxon>
        <taxon>Ecdysozoa</taxon>
        <taxon>Arthropoda</taxon>
        <taxon>Hexapoda</taxon>
        <taxon>Insecta</taxon>
        <taxon>Pterygota</taxon>
        <taxon>Neoptera</taxon>
        <taxon>Endopterygota</taxon>
        <taxon>Diptera</taxon>
        <taxon>Brachycera</taxon>
        <taxon>Muscomorpha</taxon>
        <taxon>Ephydroidea</taxon>
        <taxon>Drosophilidae</taxon>
        <taxon>Drosophila</taxon>
        <taxon>Sophophora</taxon>
    </lineage>
</organism>